<sequence>MSDEKTEQPTDKKLEDAHRDGETAKSADLTAAAVLLSGCLLLALTASVFGERWRALLDLALDVDSSRHPLMTLKQTISHFALQLVLMTLPVGFVFALVAWIATWAQTGVVLSFKPVELKMSAINPASGLKRIFSVRSMIDLVKMIIKGVAVAAAVWKLILILMPSIVGAAYQSVMDIAEIGMTLLVRLLAAGGGLFLILGAADFGIQRWLFIRDHRMSKDEVKREHKNSEGDPHIKGERKKLARELADEAKPKQSVAGAQAVVVNPTHYAVAIRYAPEEYGLPRIIAKGVDDEALALREEAAALGIPIVGNPPLARSLYRVDLYGPVPEPLFETVAEVLAWVGEMGASGTPGAEPQH</sequence>
<reference key="1">
    <citation type="journal article" date="1993" name="Mol. Gen. Genet.">
        <title>Homology between the HrpO protein of Pseudomonas solanacearum and bacterial proteins implicated in a signal peptide-independent secretion mechanism.</title>
        <authorList>
            <person name="Gough C.L."/>
            <person name="Genin S."/>
            <person name="Lopes V."/>
            <person name="Boucher C.A."/>
        </authorList>
    </citation>
    <scope>NUCLEOTIDE SEQUENCE [GENOMIC DNA]</scope>
    <source>
        <strain>ATCC BAA-1114 / GMI1000</strain>
    </source>
</reference>
<reference key="2">
    <citation type="journal article" date="2002" name="Nature">
        <title>Genome sequence of the plant pathogen Ralstonia solanacearum.</title>
        <authorList>
            <person name="Salanoubat M."/>
            <person name="Genin S."/>
            <person name="Artiguenave F."/>
            <person name="Gouzy J."/>
            <person name="Mangenot S."/>
            <person name="Arlat M."/>
            <person name="Billault A."/>
            <person name="Brottier P."/>
            <person name="Camus J.-C."/>
            <person name="Cattolico L."/>
            <person name="Chandler M."/>
            <person name="Choisne N."/>
            <person name="Claudel-Renard C."/>
            <person name="Cunnac S."/>
            <person name="Demange N."/>
            <person name="Gaspin C."/>
            <person name="Lavie M."/>
            <person name="Moisan A."/>
            <person name="Robert C."/>
            <person name="Saurin W."/>
            <person name="Schiex T."/>
            <person name="Siguier P."/>
            <person name="Thebault P."/>
            <person name="Whalen M."/>
            <person name="Wincker P."/>
            <person name="Levy M."/>
            <person name="Weissenbach J."/>
            <person name="Boucher C.A."/>
        </authorList>
    </citation>
    <scope>NUCLEOTIDE SEQUENCE [LARGE SCALE GENOMIC DNA]</scope>
    <source>
        <strain>ATCC BAA-1114 / GMI1000</strain>
    </source>
</reference>
<name>HRCU_RALN1</name>
<proteinExistence type="inferred from homology"/>
<keyword id="KW-1003">Cell membrane</keyword>
<keyword id="KW-0928">Hypersensitive response elicitation</keyword>
<keyword id="KW-0472">Membrane</keyword>
<keyword id="KW-0614">Plasmid</keyword>
<keyword id="KW-0653">Protein transport</keyword>
<keyword id="KW-1185">Reference proteome</keyword>
<keyword id="KW-0812">Transmembrane</keyword>
<keyword id="KW-1133">Transmembrane helix</keyword>
<keyword id="KW-0813">Transport</keyword>
<dbReference type="EMBL" id="AJ245811">
    <property type="protein sequence ID" value="CAB58251.1"/>
    <property type="molecule type" value="Genomic_DNA"/>
</dbReference>
<dbReference type="EMBL" id="AL646053">
    <property type="protein sequence ID" value="CAD18015.1"/>
    <property type="molecule type" value="Genomic_DNA"/>
</dbReference>
<dbReference type="PIR" id="S35250">
    <property type="entry name" value="S35250"/>
</dbReference>
<dbReference type="RefSeq" id="WP_011004161.1">
    <property type="nucleotide sequence ID" value="NC_003296.1"/>
</dbReference>
<dbReference type="SMR" id="P35652"/>
<dbReference type="STRING" id="267608.RSp0864"/>
<dbReference type="MEROPS" id="N06.004"/>
<dbReference type="EnsemblBacteria" id="CAD18015">
    <property type="protein sequence ID" value="CAD18015"/>
    <property type="gene ID" value="RSp0864"/>
</dbReference>
<dbReference type="KEGG" id="rso:RSp0864"/>
<dbReference type="PATRIC" id="fig|267608.8.peg.4334"/>
<dbReference type="eggNOG" id="COG1377">
    <property type="taxonomic scope" value="Bacteria"/>
</dbReference>
<dbReference type="HOGENOM" id="CLU_041013_1_3_4"/>
<dbReference type="Proteomes" id="UP000001436">
    <property type="component" value="Plasmid megaplasmid Rsp"/>
</dbReference>
<dbReference type="GO" id="GO:0005886">
    <property type="term" value="C:plasma membrane"/>
    <property type="evidence" value="ECO:0007669"/>
    <property type="project" value="UniProtKB-SubCell"/>
</dbReference>
<dbReference type="GO" id="GO:0009306">
    <property type="term" value="P:protein secretion"/>
    <property type="evidence" value="ECO:0007669"/>
    <property type="project" value="InterPro"/>
</dbReference>
<dbReference type="GO" id="GO:0052040">
    <property type="term" value="P:symbiont-mediated perturbation of host programmed cell death"/>
    <property type="evidence" value="ECO:0007669"/>
    <property type="project" value="UniProtKB-KW"/>
</dbReference>
<dbReference type="Gene3D" id="3.40.1690.10">
    <property type="entry name" value="secretion proteins EscU"/>
    <property type="match status" value="1"/>
</dbReference>
<dbReference type="InterPro" id="IPR006307">
    <property type="entry name" value="BsaZ-like"/>
</dbReference>
<dbReference type="InterPro" id="IPR006135">
    <property type="entry name" value="T3SS_substrate_exporter"/>
</dbReference>
<dbReference type="InterPro" id="IPR029025">
    <property type="entry name" value="T3SS_substrate_exporter_C"/>
</dbReference>
<dbReference type="NCBIfam" id="TIGR01404">
    <property type="entry name" value="FlhB_rel_III"/>
    <property type="match status" value="1"/>
</dbReference>
<dbReference type="PANTHER" id="PTHR30531">
    <property type="entry name" value="FLAGELLAR BIOSYNTHETIC PROTEIN FLHB"/>
    <property type="match status" value="1"/>
</dbReference>
<dbReference type="PANTHER" id="PTHR30531:SF12">
    <property type="entry name" value="FLAGELLAR BIOSYNTHETIC PROTEIN FLHB"/>
    <property type="match status" value="1"/>
</dbReference>
<dbReference type="Pfam" id="PF01312">
    <property type="entry name" value="Bac_export_2"/>
    <property type="match status" value="1"/>
</dbReference>
<dbReference type="PRINTS" id="PR00950">
    <property type="entry name" value="TYPE3IMSPROT"/>
</dbReference>
<dbReference type="SUPFAM" id="SSF160544">
    <property type="entry name" value="EscU C-terminal domain-like"/>
    <property type="match status" value="1"/>
</dbReference>
<evidence type="ECO:0000255" key="1"/>
<evidence type="ECO:0000256" key="2">
    <source>
        <dbReference type="SAM" id="MobiDB-lite"/>
    </source>
</evidence>
<evidence type="ECO:0000305" key="3"/>
<comment type="function">
    <text>Involved in the secretion of PopA, a proteinaceous elicitor of the hypersensitivity response in plants.</text>
</comment>
<comment type="subcellular location">
    <subcellularLocation>
        <location evidence="3">Cell membrane</location>
        <topology evidence="3">Multi-pass membrane protein</topology>
    </subcellularLocation>
</comment>
<comment type="similarity">
    <text evidence="3">Belongs to the type III secretion exporter family.</text>
</comment>
<gene>
    <name type="primary">hrcU</name>
    <name type="synonym">hrpN</name>
    <name type="ordered locus">RSp0864</name>
    <name type="ORF">RS01635</name>
</gene>
<feature type="chain" id="PRO_0000180959" description="Hypersensitivity response secretion protein HrcU">
    <location>
        <begin position="1"/>
        <end position="357"/>
    </location>
</feature>
<feature type="transmembrane region" description="Helical" evidence="1">
    <location>
        <begin position="29"/>
        <end position="49"/>
    </location>
</feature>
<feature type="transmembrane region" description="Helical" evidence="1">
    <location>
        <begin position="84"/>
        <end position="104"/>
    </location>
</feature>
<feature type="transmembrane region" description="Helical" evidence="1">
    <location>
        <begin position="149"/>
        <end position="169"/>
    </location>
</feature>
<feature type="transmembrane region" description="Helical" evidence="1">
    <location>
        <begin position="180"/>
        <end position="200"/>
    </location>
</feature>
<feature type="transmembrane region" description="Helical" evidence="1">
    <location>
        <begin position="323"/>
        <end position="343"/>
    </location>
</feature>
<feature type="region of interest" description="Disordered" evidence="2">
    <location>
        <begin position="1"/>
        <end position="21"/>
    </location>
</feature>
<organism>
    <name type="scientific">Ralstonia nicotianae (strain ATCC BAA-1114 / GMI1000)</name>
    <name type="common">Ralstonia solanacearum</name>
    <dbReference type="NCBI Taxonomy" id="267608"/>
    <lineage>
        <taxon>Bacteria</taxon>
        <taxon>Pseudomonadati</taxon>
        <taxon>Pseudomonadota</taxon>
        <taxon>Betaproteobacteria</taxon>
        <taxon>Burkholderiales</taxon>
        <taxon>Burkholderiaceae</taxon>
        <taxon>Ralstonia</taxon>
        <taxon>Ralstonia solanacearum species complex</taxon>
    </lineage>
</organism>
<protein>
    <recommendedName>
        <fullName>Hypersensitivity response secretion protein HrcU</fullName>
    </recommendedName>
</protein>
<accession>P35652</accession>
<geneLocation type="plasmid">
    <name>megaplasmid Rsp</name>
</geneLocation>